<keyword id="KW-0488">Methylation</keyword>
<keyword id="KW-0687">Ribonucleoprotein</keyword>
<keyword id="KW-0689">Ribosomal protein</keyword>
<keyword id="KW-0694">RNA-binding</keyword>
<keyword id="KW-0699">rRNA-binding</keyword>
<keyword id="KW-0820">tRNA-binding</keyword>
<dbReference type="EMBL" id="AP008229">
    <property type="protein sequence ID" value="BAE70147.1"/>
    <property type="molecule type" value="Genomic_DNA"/>
</dbReference>
<dbReference type="RefSeq" id="WP_002811712.1">
    <property type="nucleotide sequence ID" value="NC_007705.1"/>
</dbReference>
<dbReference type="SMR" id="Q2NZY0"/>
<dbReference type="GeneID" id="97509330"/>
<dbReference type="KEGG" id="xom:XOO3392"/>
<dbReference type="HOGENOM" id="CLU_104295_1_2_6"/>
<dbReference type="GO" id="GO:0015935">
    <property type="term" value="C:small ribosomal subunit"/>
    <property type="evidence" value="ECO:0007669"/>
    <property type="project" value="InterPro"/>
</dbReference>
<dbReference type="GO" id="GO:0019843">
    <property type="term" value="F:rRNA binding"/>
    <property type="evidence" value="ECO:0007669"/>
    <property type="project" value="UniProtKB-UniRule"/>
</dbReference>
<dbReference type="GO" id="GO:0003735">
    <property type="term" value="F:structural constituent of ribosome"/>
    <property type="evidence" value="ECO:0007669"/>
    <property type="project" value="InterPro"/>
</dbReference>
<dbReference type="GO" id="GO:0000049">
    <property type="term" value="F:tRNA binding"/>
    <property type="evidence" value="ECO:0007669"/>
    <property type="project" value="UniProtKB-UniRule"/>
</dbReference>
<dbReference type="GO" id="GO:0006412">
    <property type="term" value="P:translation"/>
    <property type="evidence" value="ECO:0007669"/>
    <property type="project" value="UniProtKB-UniRule"/>
</dbReference>
<dbReference type="CDD" id="cd03368">
    <property type="entry name" value="Ribosomal_S12"/>
    <property type="match status" value="1"/>
</dbReference>
<dbReference type="FunFam" id="2.40.50.140:FF:000001">
    <property type="entry name" value="30S ribosomal protein S12"/>
    <property type="match status" value="1"/>
</dbReference>
<dbReference type="Gene3D" id="2.40.50.140">
    <property type="entry name" value="Nucleic acid-binding proteins"/>
    <property type="match status" value="1"/>
</dbReference>
<dbReference type="HAMAP" id="MF_00403_B">
    <property type="entry name" value="Ribosomal_uS12_B"/>
    <property type="match status" value="1"/>
</dbReference>
<dbReference type="InterPro" id="IPR012340">
    <property type="entry name" value="NA-bd_OB-fold"/>
</dbReference>
<dbReference type="InterPro" id="IPR006032">
    <property type="entry name" value="Ribosomal_uS12"/>
</dbReference>
<dbReference type="InterPro" id="IPR005679">
    <property type="entry name" value="Ribosomal_uS12_bac"/>
</dbReference>
<dbReference type="NCBIfam" id="TIGR00981">
    <property type="entry name" value="rpsL_bact"/>
    <property type="match status" value="1"/>
</dbReference>
<dbReference type="PANTHER" id="PTHR11652">
    <property type="entry name" value="30S RIBOSOMAL PROTEIN S12 FAMILY MEMBER"/>
    <property type="match status" value="1"/>
</dbReference>
<dbReference type="Pfam" id="PF00164">
    <property type="entry name" value="Ribosom_S12_S23"/>
    <property type="match status" value="1"/>
</dbReference>
<dbReference type="PIRSF" id="PIRSF002133">
    <property type="entry name" value="Ribosomal_S12/S23"/>
    <property type="match status" value="1"/>
</dbReference>
<dbReference type="PRINTS" id="PR01034">
    <property type="entry name" value="RIBOSOMALS12"/>
</dbReference>
<dbReference type="SUPFAM" id="SSF50249">
    <property type="entry name" value="Nucleic acid-binding proteins"/>
    <property type="match status" value="1"/>
</dbReference>
<dbReference type="PROSITE" id="PS00055">
    <property type="entry name" value="RIBOSOMAL_S12"/>
    <property type="match status" value="1"/>
</dbReference>
<accession>Q2NZY0</accession>
<gene>
    <name evidence="2" type="primary">rpsL</name>
    <name type="ordered locus">XOO3392</name>
</gene>
<organism>
    <name type="scientific">Xanthomonas oryzae pv. oryzae (strain MAFF 311018)</name>
    <dbReference type="NCBI Taxonomy" id="342109"/>
    <lineage>
        <taxon>Bacteria</taxon>
        <taxon>Pseudomonadati</taxon>
        <taxon>Pseudomonadota</taxon>
        <taxon>Gammaproteobacteria</taxon>
        <taxon>Lysobacterales</taxon>
        <taxon>Lysobacteraceae</taxon>
        <taxon>Xanthomonas</taxon>
    </lineage>
</organism>
<sequence length="124" mass="13753">MTTINQLVRKPRQATTYKSASPALDKCPQRRGVCTRVYTTTPKKPNSALRKVAKVRLTNQEEVISYIGGEGHNLQEHSVVLIRGGRVKDLPGVRYHTVRGSLDAAGVAKRRQGRSKYGAKRPKS</sequence>
<proteinExistence type="inferred from homology"/>
<reference key="1">
    <citation type="journal article" date="2005" name="Jpn. Agric. Res. Q.">
        <title>Genome sequence of Xanthomonas oryzae pv. oryzae suggests contribution of large numbers of effector genes and insertion sequences to its race diversity.</title>
        <authorList>
            <person name="Ochiai H."/>
            <person name="Inoue Y."/>
            <person name="Takeya M."/>
            <person name="Sasaki A."/>
            <person name="Kaku H."/>
        </authorList>
    </citation>
    <scope>NUCLEOTIDE SEQUENCE [LARGE SCALE GENOMIC DNA]</scope>
    <source>
        <strain>MAFF 311018</strain>
    </source>
</reference>
<name>RS12_XANOM</name>
<protein>
    <recommendedName>
        <fullName evidence="2">Small ribosomal subunit protein uS12</fullName>
    </recommendedName>
    <alternativeName>
        <fullName evidence="4">30S ribosomal protein S12</fullName>
    </alternativeName>
</protein>
<evidence type="ECO:0000250" key="1"/>
<evidence type="ECO:0000255" key="2">
    <source>
        <dbReference type="HAMAP-Rule" id="MF_00403"/>
    </source>
</evidence>
<evidence type="ECO:0000256" key="3">
    <source>
        <dbReference type="SAM" id="MobiDB-lite"/>
    </source>
</evidence>
<evidence type="ECO:0000305" key="4"/>
<feature type="chain" id="PRO_0000238152" description="Small ribosomal subunit protein uS12">
    <location>
        <begin position="1"/>
        <end position="124"/>
    </location>
</feature>
<feature type="region of interest" description="Disordered" evidence="3">
    <location>
        <begin position="1"/>
        <end position="24"/>
    </location>
</feature>
<feature type="modified residue" description="3-methylthioaspartic acid" evidence="1">
    <location>
        <position position="89"/>
    </location>
</feature>
<comment type="function">
    <text evidence="2">With S4 and S5 plays an important role in translational accuracy.</text>
</comment>
<comment type="function">
    <text evidence="2">Interacts with and stabilizes bases of the 16S rRNA that are involved in tRNA selection in the A site and with the mRNA backbone. Located at the interface of the 30S and 50S subunits, it traverses the body of the 30S subunit contacting proteins on the other side and probably holding the rRNA structure together. The combined cluster of proteins S8, S12 and S17 appears to hold together the shoulder and platform of the 30S subunit.</text>
</comment>
<comment type="subunit">
    <text evidence="2">Part of the 30S ribosomal subunit. Contacts proteins S8 and S17. May interact with IF1 in the 30S initiation complex.</text>
</comment>
<comment type="similarity">
    <text evidence="2">Belongs to the universal ribosomal protein uS12 family.</text>
</comment>